<gene>
    <name evidence="1" type="primary">atpE</name>
    <name type="ordered locus">Teth39_2262</name>
</gene>
<keyword id="KW-0066">ATP synthesis</keyword>
<keyword id="KW-0375">Hydrogen ion transport</keyword>
<keyword id="KW-0406">Ion transport</keyword>
<keyword id="KW-1185">Reference proteome</keyword>
<keyword id="KW-0813">Transport</keyword>
<name>VATE_THEP3</name>
<organism>
    <name type="scientific">Thermoanaerobacter pseudethanolicus (strain ATCC 33223 / 39E)</name>
    <name type="common">Clostridium thermohydrosulfuricum</name>
    <dbReference type="NCBI Taxonomy" id="340099"/>
    <lineage>
        <taxon>Bacteria</taxon>
        <taxon>Bacillati</taxon>
        <taxon>Bacillota</taxon>
        <taxon>Clostridia</taxon>
        <taxon>Thermoanaerobacterales</taxon>
        <taxon>Thermoanaerobacteraceae</taxon>
        <taxon>Thermoanaerobacter</taxon>
    </lineage>
</organism>
<proteinExistence type="inferred from homology"/>
<dbReference type="EMBL" id="CP000924">
    <property type="protein sequence ID" value="ABY95883.1"/>
    <property type="molecule type" value="Genomic_DNA"/>
</dbReference>
<dbReference type="RefSeq" id="WP_012269823.1">
    <property type="nucleotide sequence ID" value="NC_010321.1"/>
</dbReference>
<dbReference type="SMR" id="B0K8F1"/>
<dbReference type="STRING" id="340099.Teth39_2262"/>
<dbReference type="KEGG" id="tpd:Teth39_2262"/>
<dbReference type="eggNOG" id="COG1390">
    <property type="taxonomic scope" value="Bacteria"/>
</dbReference>
<dbReference type="HOGENOM" id="CLU_105846_0_0_9"/>
<dbReference type="Proteomes" id="UP000002156">
    <property type="component" value="Chromosome"/>
</dbReference>
<dbReference type="GO" id="GO:0033178">
    <property type="term" value="C:proton-transporting two-sector ATPase complex, catalytic domain"/>
    <property type="evidence" value="ECO:0007669"/>
    <property type="project" value="InterPro"/>
</dbReference>
<dbReference type="GO" id="GO:0005524">
    <property type="term" value="F:ATP binding"/>
    <property type="evidence" value="ECO:0007669"/>
    <property type="project" value="UniProtKB-UniRule"/>
</dbReference>
<dbReference type="GO" id="GO:0046933">
    <property type="term" value="F:proton-transporting ATP synthase activity, rotational mechanism"/>
    <property type="evidence" value="ECO:0007669"/>
    <property type="project" value="UniProtKB-UniRule"/>
</dbReference>
<dbReference type="GO" id="GO:0046961">
    <property type="term" value="F:proton-transporting ATPase activity, rotational mechanism"/>
    <property type="evidence" value="ECO:0007669"/>
    <property type="project" value="InterPro"/>
</dbReference>
<dbReference type="GO" id="GO:0042777">
    <property type="term" value="P:proton motive force-driven plasma membrane ATP synthesis"/>
    <property type="evidence" value="ECO:0007669"/>
    <property type="project" value="UniProtKB-UniRule"/>
</dbReference>
<dbReference type="Gene3D" id="3.30.2320.30">
    <property type="entry name" value="ATP synthase, E subunit, C-terminal"/>
    <property type="match status" value="1"/>
</dbReference>
<dbReference type="Gene3D" id="1.20.5.620">
    <property type="entry name" value="F1F0 ATP synthase subunit B, membrane domain"/>
    <property type="match status" value="1"/>
</dbReference>
<dbReference type="HAMAP" id="MF_00311">
    <property type="entry name" value="ATP_synth_E_arch"/>
    <property type="match status" value="1"/>
</dbReference>
<dbReference type="InterPro" id="IPR038495">
    <property type="entry name" value="ATPase_E_C"/>
</dbReference>
<dbReference type="InterPro" id="IPR002842">
    <property type="entry name" value="ATPase_V1_Esu"/>
</dbReference>
<dbReference type="Pfam" id="PF01991">
    <property type="entry name" value="vATP-synt_E"/>
    <property type="match status" value="1"/>
</dbReference>
<dbReference type="SUPFAM" id="SSF160527">
    <property type="entry name" value="V-type ATPase subunit E-like"/>
    <property type="match status" value="1"/>
</dbReference>
<reference key="1">
    <citation type="submission" date="2008-01" db="EMBL/GenBank/DDBJ databases">
        <title>Complete sequence of Thermoanaerobacter pseudethanolicus 39E.</title>
        <authorList>
            <person name="Copeland A."/>
            <person name="Lucas S."/>
            <person name="Lapidus A."/>
            <person name="Barry K."/>
            <person name="Glavina del Rio T."/>
            <person name="Dalin E."/>
            <person name="Tice H."/>
            <person name="Pitluck S."/>
            <person name="Bruce D."/>
            <person name="Goodwin L."/>
            <person name="Saunders E."/>
            <person name="Brettin T."/>
            <person name="Detter J.C."/>
            <person name="Han C."/>
            <person name="Schmutz J."/>
            <person name="Larimer F."/>
            <person name="Land M."/>
            <person name="Hauser L."/>
            <person name="Kyrpides N."/>
            <person name="Lykidis A."/>
            <person name="Hemme C."/>
            <person name="Fields M.W."/>
            <person name="He Z."/>
            <person name="Zhou J."/>
            <person name="Richardson P."/>
        </authorList>
    </citation>
    <scope>NUCLEOTIDE SEQUENCE [LARGE SCALE GENOMIC DNA]</scope>
    <source>
        <strain>ATCC 33223 / DSM 2355 / 39E</strain>
    </source>
</reference>
<sequence length="200" mass="23016">MQGIAKIKEKIFEEATEQKNRIIEKAKKEAAEILEKARKQAVQLEAEAEKKAKKVAREEKRKILSIAELEERKRYLEAKQALINEAFVRAENKLLNLEPEKYRDLVYRMILAAAVDGNEEIIVSEADKEKITPELLERVNEALKKQGKAGNIRFSGEKRAIKGGFILKSATVEINCTFDYLLKVQREELETEVARILFEE</sequence>
<accession>B0K8F1</accession>
<feature type="chain" id="PRO_1000115682" description="V-type proton ATPase subunit E">
    <location>
        <begin position="1"/>
        <end position="200"/>
    </location>
</feature>
<evidence type="ECO:0000255" key="1">
    <source>
        <dbReference type="HAMAP-Rule" id="MF_00311"/>
    </source>
</evidence>
<comment type="function">
    <text evidence="1">Produces ATP from ADP in the presence of a proton gradient across the membrane.</text>
</comment>
<comment type="similarity">
    <text evidence="1">Belongs to the V-ATPase E subunit family.</text>
</comment>
<protein>
    <recommendedName>
        <fullName evidence="1">V-type proton ATPase subunit E</fullName>
    </recommendedName>
    <alternativeName>
        <fullName evidence="1">V-ATPase subunit E</fullName>
    </alternativeName>
</protein>